<reference key="1">
    <citation type="journal article" date="2009" name="PLoS Biol.">
        <title>Lineage-specific biology revealed by a finished genome assembly of the mouse.</title>
        <authorList>
            <person name="Church D.M."/>
            <person name="Goodstadt L."/>
            <person name="Hillier L.W."/>
            <person name="Zody M.C."/>
            <person name="Goldstein S."/>
            <person name="She X."/>
            <person name="Bult C.J."/>
            <person name="Agarwala R."/>
            <person name="Cherry J.L."/>
            <person name="DiCuccio M."/>
            <person name="Hlavina W."/>
            <person name="Kapustin Y."/>
            <person name="Meric P."/>
            <person name="Maglott D."/>
            <person name="Birtle Z."/>
            <person name="Marques A.C."/>
            <person name="Graves T."/>
            <person name="Zhou S."/>
            <person name="Teague B."/>
            <person name="Potamousis K."/>
            <person name="Churas C."/>
            <person name="Place M."/>
            <person name="Herschleb J."/>
            <person name="Runnheim R."/>
            <person name="Forrest D."/>
            <person name="Amos-Landgraf J."/>
            <person name="Schwartz D.C."/>
            <person name="Cheng Z."/>
            <person name="Lindblad-Toh K."/>
            <person name="Eichler E.E."/>
            <person name="Ponting C.P."/>
        </authorList>
    </citation>
    <scope>NUCLEOTIDE SEQUENCE [LARGE SCALE GENOMIC DNA]</scope>
    <source>
        <strain>C57BL/6J</strain>
    </source>
</reference>
<reference key="2">
    <citation type="journal article" date="2004" name="Genome Res.">
        <title>The status, quality, and expansion of the NIH full-length cDNA project: the Mammalian Gene Collection (MGC).</title>
        <authorList>
            <consortium name="The MGC Project Team"/>
        </authorList>
    </citation>
    <scope>NUCLEOTIDE SEQUENCE [LARGE SCALE MRNA] (ISOFORM 1)</scope>
</reference>
<reference key="3">
    <citation type="journal article" date="2005" name="Science">
        <title>The transcriptional landscape of the mammalian genome.</title>
        <authorList>
            <person name="Carninci P."/>
            <person name="Kasukawa T."/>
            <person name="Katayama S."/>
            <person name="Gough J."/>
            <person name="Frith M.C."/>
            <person name="Maeda N."/>
            <person name="Oyama R."/>
            <person name="Ravasi T."/>
            <person name="Lenhard B."/>
            <person name="Wells C."/>
            <person name="Kodzius R."/>
            <person name="Shimokawa K."/>
            <person name="Bajic V.B."/>
            <person name="Brenner S.E."/>
            <person name="Batalov S."/>
            <person name="Forrest A.R."/>
            <person name="Zavolan M."/>
            <person name="Davis M.J."/>
            <person name="Wilming L.G."/>
            <person name="Aidinis V."/>
            <person name="Allen J.E."/>
            <person name="Ambesi-Impiombato A."/>
            <person name="Apweiler R."/>
            <person name="Aturaliya R.N."/>
            <person name="Bailey T.L."/>
            <person name="Bansal M."/>
            <person name="Baxter L."/>
            <person name="Beisel K.W."/>
            <person name="Bersano T."/>
            <person name="Bono H."/>
            <person name="Chalk A.M."/>
            <person name="Chiu K.P."/>
            <person name="Choudhary V."/>
            <person name="Christoffels A."/>
            <person name="Clutterbuck D.R."/>
            <person name="Crowe M.L."/>
            <person name="Dalla E."/>
            <person name="Dalrymple B.P."/>
            <person name="de Bono B."/>
            <person name="Della Gatta G."/>
            <person name="di Bernardo D."/>
            <person name="Down T."/>
            <person name="Engstrom P."/>
            <person name="Fagiolini M."/>
            <person name="Faulkner G."/>
            <person name="Fletcher C.F."/>
            <person name="Fukushima T."/>
            <person name="Furuno M."/>
            <person name="Futaki S."/>
            <person name="Gariboldi M."/>
            <person name="Georgii-Hemming P."/>
            <person name="Gingeras T.R."/>
            <person name="Gojobori T."/>
            <person name="Green R.E."/>
            <person name="Gustincich S."/>
            <person name="Harbers M."/>
            <person name="Hayashi Y."/>
            <person name="Hensch T.K."/>
            <person name="Hirokawa N."/>
            <person name="Hill D."/>
            <person name="Huminiecki L."/>
            <person name="Iacono M."/>
            <person name="Ikeo K."/>
            <person name="Iwama A."/>
            <person name="Ishikawa T."/>
            <person name="Jakt M."/>
            <person name="Kanapin A."/>
            <person name="Katoh M."/>
            <person name="Kawasawa Y."/>
            <person name="Kelso J."/>
            <person name="Kitamura H."/>
            <person name="Kitano H."/>
            <person name="Kollias G."/>
            <person name="Krishnan S.P."/>
            <person name="Kruger A."/>
            <person name="Kummerfeld S.K."/>
            <person name="Kurochkin I.V."/>
            <person name="Lareau L.F."/>
            <person name="Lazarevic D."/>
            <person name="Lipovich L."/>
            <person name="Liu J."/>
            <person name="Liuni S."/>
            <person name="McWilliam S."/>
            <person name="Madan Babu M."/>
            <person name="Madera M."/>
            <person name="Marchionni L."/>
            <person name="Matsuda H."/>
            <person name="Matsuzawa S."/>
            <person name="Miki H."/>
            <person name="Mignone F."/>
            <person name="Miyake S."/>
            <person name="Morris K."/>
            <person name="Mottagui-Tabar S."/>
            <person name="Mulder N."/>
            <person name="Nakano N."/>
            <person name="Nakauchi H."/>
            <person name="Ng P."/>
            <person name="Nilsson R."/>
            <person name="Nishiguchi S."/>
            <person name="Nishikawa S."/>
            <person name="Nori F."/>
            <person name="Ohara O."/>
            <person name="Okazaki Y."/>
            <person name="Orlando V."/>
            <person name="Pang K.C."/>
            <person name="Pavan W.J."/>
            <person name="Pavesi G."/>
            <person name="Pesole G."/>
            <person name="Petrovsky N."/>
            <person name="Piazza S."/>
            <person name="Reed J."/>
            <person name="Reid J.F."/>
            <person name="Ring B.Z."/>
            <person name="Ringwald M."/>
            <person name="Rost B."/>
            <person name="Ruan Y."/>
            <person name="Salzberg S.L."/>
            <person name="Sandelin A."/>
            <person name="Schneider C."/>
            <person name="Schoenbach C."/>
            <person name="Sekiguchi K."/>
            <person name="Semple C.A."/>
            <person name="Seno S."/>
            <person name="Sessa L."/>
            <person name="Sheng Y."/>
            <person name="Shibata Y."/>
            <person name="Shimada H."/>
            <person name="Shimada K."/>
            <person name="Silva D."/>
            <person name="Sinclair B."/>
            <person name="Sperling S."/>
            <person name="Stupka E."/>
            <person name="Sugiura K."/>
            <person name="Sultana R."/>
            <person name="Takenaka Y."/>
            <person name="Taki K."/>
            <person name="Tammoja K."/>
            <person name="Tan S.L."/>
            <person name="Tang S."/>
            <person name="Taylor M.S."/>
            <person name="Tegner J."/>
            <person name="Teichmann S.A."/>
            <person name="Ueda H.R."/>
            <person name="van Nimwegen E."/>
            <person name="Verardo R."/>
            <person name="Wei C.L."/>
            <person name="Yagi K."/>
            <person name="Yamanishi H."/>
            <person name="Zabarovsky E."/>
            <person name="Zhu S."/>
            <person name="Zimmer A."/>
            <person name="Hide W."/>
            <person name="Bult C."/>
            <person name="Grimmond S.M."/>
            <person name="Teasdale R.D."/>
            <person name="Liu E.T."/>
            <person name="Brusic V."/>
            <person name="Quackenbush J."/>
            <person name="Wahlestedt C."/>
            <person name="Mattick J.S."/>
            <person name="Hume D.A."/>
            <person name="Kai C."/>
            <person name="Sasaki D."/>
            <person name="Tomaru Y."/>
            <person name="Fukuda S."/>
            <person name="Kanamori-Katayama M."/>
            <person name="Suzuki M."/>
            <person name="Aoki J."/>
            <person name="Arakawa T."/>
            <person name="Iida J."/>
            <person name="Imamura K."/>
            <person name="Itoh M."/>
            <person name="Kato T."/>
            <person name="Kawaji H."/>
            <person name="Kawagashira N."/>
            <person name="Kawashima T."/>
            <person name="Kojima M."/>
            <person name="Kondo S."/>
            <person name="Konno H."/>
            <person name="Nakano K."/>
            <person name="Ninomiya N."/>
            <person name="Nishio T."/>
            <person name="Okada M."/>
            <person name="Plessy C."/>
            <person name="Shibata K."/>
            <person name="Shiraki T."/>
            <person name="Suzuki S."/>
            <person name="Tagami M."/>
            <person name="Waki K."/>
            <person name="Watahiki A."/>
            <person name="Okamura-Oho Y."/>
            <person name="Suzuki H."/>
            <person name="Kawai J."/>
            <person name="Hayashizaki Y."/>
        </authorList>
    </citation>
    <scope>NUCLEOTIDE SEQUENCE [LARGE SCALE MRNA] OF 1-1264 (ISOFORM 2)</scope>
    <source>
        <strain>NOD</strain>
    </source>
</reference>
<reference key="4">
    <citation type="journal article" date="2007" name="Proc. Natl. Acad. Sci. U.S.A.">
        <title>Large-scale phosphorylation analysis of mouse liver.</title>
        <authorList>
            <person name="Villen J."/>
            <person name="Beausoleil S.A."/>
            <person name="Gerber S.A."/>
            <person name="Gygi S.P."/>
        </authorList>
    </citation>
    <scope>PHOSPHORYLATION [LARGE SCALE ANALYSIS] AT SER-987</scope>
    <scope>IDENTIFICATION BY MASS SPECTROMETRY [LARGE SCALE ANALYSIS]</scope>
    <source>
        <tissue>Liver</tissue>
    </source>
</reference>
<reference key="5">
    <citation type="journal article" date="2009" name="Mol. Cell. Proteomics">
        <title>Large scale localization of protein phosphorylation by use of electron capture dissociation mass spectrometry.</title>
        <authorList>
            <person name="Sweet S.M."/>
            <person name="Bailey C.M."/>
            <person name="Cunningham D.L."/>
            <person name="Heath J.K."/>
            <person name="Cooper H.J."/>
        </authorList>
    </citation>
    <scope>PHOSPHORYLATION [LARGE SCALE ANALYSIS] AT SER-971</scope>
    <scope>IDENTIFICATION BY MASS SPECTROMETRY [LARGE SCALE ANALYSIS]</scope>
    <source>
        <tissue>Embryonic fibroblast</tissue>
    </source>
</reference>
<reference key="6">
    <citation type="journal article" date="2010" name="Cell">
        <title>A tissue-specific atlas of mouse protein phosphorylation and expression.</title>
        <authorList>
            <person name="Huttlin E.L."/>
            <person name="Jedrychowski M.P."/>
            <person name="Elias J.E."/>
            <person name="Goswami T."/>
            <person name="Rad R."/>
            <person name="Beausoleil S.A."/>
            <person name="Villen J."/>
            <person name="Haas W."/>
            <person name="Sowa M.E."/>
            <person name="Gygi S.P."/>
        </authorList>
    </citation>
    <scope>PHOSPHORYLATION [LARGE SCALE ANALYSIS] AT SER-740; THR-966; SER-971; SER-987; SER-1096; SER-1248 AND SER-1637</scope>
    <scope>IDENTIFICATION BY MASS SPECTROMETRY [LARGE SCALE ANALYSIS]</scope>
    <source>
        <tissue>Brain</tissue>
        <tissue>Brown adipose tissue</tissue>
        <tissue>Heart</tissue>
        <tissue>Kidney</tissue>
        <tissue>Liver</tissue>
        <tissue>Lung</tissue>
        <tissue>Pancreas</tissue>
        <tissue>Spleen</tissue>
        <tissue>Testis</tissue>
    </source>
</reference>
<reference key="7">
    <citation type="journal article" date="2011" name="J. Biol. Chem.">
        <title>Insulin-stimulated GLUT4 protein translocation in adipocytes requires the Rab10 guanine nucleotide exchange factor Dennd4C.</title>
        <authorList>
            <person name="Sano H."/>
            <person name="Peck G.R."/>
            <person name="Kettenbach A.N."/>
            <person name="Gerber S.A."/>
            <person name="Lienhard G.E."/>
        </authorList>
    </citation>
    <scope>FUNCTION</scope>
    <scope>PHOSPHORYLATION AT SER-1043; SER-1096 AND SER-1321</scope>
    <scope>SUBCELLULAR LOCATION</scope>
</reference>
<evidence type="ECO:0000250" key="1">
    <source>
        <dbReference type="UniProtKB" id="Q5VZ89"/>
    </source>
</evidence>
<evidence type="ECO:0000255" key="2">
    <source>
        <dbReference type="PROSITE-ProRule" id="PRU00304"/>
    </source>
</evidence>
<evidence type="ECO:0000255" key="3">
    <source>
        <dbReference type="PROSITE-ProRule" id="PRU00831"/>
    </source>
</evidence>
<evidence type="ECO:0000256" key="4">
    <source>
        <dbReference type="SAM" id="MobiDB-lite"/>
    </source>
</evidence>
<evidence type="ECO:0000269" key="5">
    <source>
    </source>
</evidence>
<evidence type="ECO:0000303" key="6">
    <source>
    </source>
</evidence>
<evidence type="ECO:0007744" key="7">
    <source>
    </source>
</evidence>
<evidence type="ECO:0007744" key="8">
    <source>
    </source>
</evidence>
<evidence type="ECO:0007744" key="9">
    <source>
    </source>
</evidence>
<comment type="function">
    <text evidence="5">Guanine nucleotide exchange factor (GEF) activating RAB10. Promotes the exchange of GDP to GTP, converting inactive GDP-bound RAB10 into its active GTP-bound form. Thereby, stimulates SLC2A4/GLUT4 glucose transporter-enriched vesicles delivery to the plasma membrane in response to insulin.</text>
</comment>
<comment type="subcellular location">
    <subcellularLocation>
        <location evidence="5">Cytoplasmic vesicle membrane</location>
    </subcellularLocation>
    <subcellularLocation>
        <location evidence="5">Cell membrane</location>
    </subcellularLocation>
    <subcellularLocation>
        <location evidence="5">Cytoplasm</location>
        <location evidence="5">Cytosol</location>
    </subcellularLocation>
    <text>Associates with SLC2A4/GLUT4 storage vesicles.</text>
</comment>
<comment type="alternative products">
    <event type="alternative splicing"/>
    <isoform>
        <id>A6H8H2-1</id>
        <name>1</name>
        <sequence type="displayed"/>
    </isoform>
    <isoform>
        <id>A6H8H2-2</id>
        <name>2</name>
        <sequence type="described" ref="VSP_044491"/>
    </isoform>
</comment>
<comment type="PTM">
    <text evidence="5">Phosphorylated in response to insulin.</text>
</comment>
<accession>A6H8H2</accession>
<accession>A2AJX5</accession>
<accession>Q3U2K9</accession>
<keyword id="KW-0025">Alternative splicing</keyword>
<keyword id="KW-1003">Cell membrane</keyword>
<keyword id="KW-0963">Cytoplasm</keyword>
<keyword id="KW-0968">Cytoplasmic vesicle</keyword>
<keyword id="KW-0344">Guanine-nucleotide releasing factor</keyword>
<keyword id="KW-0472">Membrane</keyword>
<keyword id="KW-0597">Phosphoprotein</keyword>
<keyword id="KW-0653">Protein transport</keyword>
<keyword id="KW-1185">Reference proteome</keyword>
<keyword id="KW-0813">Transport</keyword>
<dbReference type="EMBL" id="AL772228">
    <property type="status" value="NOT_ANNOTATED_CDS"/>
    <property type="molecule type" value="Genomic_DNA"/>
</dbReference>
<dbReference type="EMBL" id="BX005084">
    <property type="status" value="NOT_ANNOTATED_CDS"/>
    <property type="molecule type" value="Genomic_DNA"/>
</dbReference>
<dbReference type="EMBL" id="BC146602">
    <property type="protein sequence ID" value="AAI46603.1"/>
    <property type="molecule type" value="mRNA"/>
</dbReference>
<dbReference type="EMBL" id="AK155220">
    <property type="protein sequence ID" value="BAE33131.1"/>
    <property type="molecule type" value="mRNA"/>
</dbReference>
<dbReference type="CCDS" id="CCDS51218.2">
    <molecule id="A6H8H2-1"/>
</dbReference>
<dbReference type="RefSeq" id="NP_001392353.1">
    <molecule id="A6H8H2-2"/>
    <property type="nucleotide sequence ID" value="NM_001405424.1"/>
</dbReference>
<dbReference type="RefSeq" id="NP_001392354.1">
    <molecule id="A6H8H2-1"/>
    <property type="nucleotide sequence ID" value="NM_001405425.1"/>
</dbReference>
<dbReference type="RefSeq" id="NP_908976.1">
    <molecule id="A6H8H2-1"/>
    <property type="nucleotide sequence ID" value="NM_184088.2"/>
</dbReference>
<dbReference type="RefSeq" id="XP_006538085.1">
    <property type="nucleotide sequence ID" value="XM_006538022.2"/>
</dbReference>
<dbReference type="RefSeq" id="XP_006538086.1">
    <molecule id="A6H8H2-2"/>
    <property type="nucleotide sequence ID" value="XM_006538023.4"/>
</dbReference>
<dbReference type="SMR" id="A6H8H2"/>
<dbReference type="BioGRID" id="236853">
    <property type="interactions" value="6"/>
</dbReference>
<dbReference type="FunCoup" id="A6H8H2">
    <property type="interactions" value="4326"/>
</dbReference>
<dbReference type="STRING" id="10090.ENSMUSP00000123367"/>
<dbReference type="GlyGen" id="A6H8H2">
    <property type="glycosylation" value="6 sites, 4 N-linked glycans (4 sites)"/>
</dbReference>
<dbReference type="iPTMnet" id="A6H8H2"/>
<dbReference type="PhosphoSitePlus" id="A6H8H2"/>
<dbReference type="SwissPalm" id="A6H8H2"/>
<dbReference type="jPOST" id="A6H8H2"/>
<dbReference type="PaxDb" id="10090-ENSMUSP00000080685"/>
<dbReference type="ProteomicsDB" id="279619">
    <molecule id="A6H8H2-1"/>
</dbReference>
<dbReference type="ProteomicsDB" id="279620">
    <molecule id="A6H8H2-2"/>
</dbReference>
<dbReference type="Pumba" id="A6H8H2"/>
<dbReference type="Antibodypedia" id="10280">
    <property type="antibodies" value="85 antibodies from 18 providers"/>
</dbReference>
<dbReference type="Ensembl" id="ENSMUST00000082026.14">
    <molecule id="A6H8H2-2"/>
    <property type="protein sequence ID" value="ENSMUSP00000080685.7"/>
    <property type="gene ID" value="ENSMUSG00000038024.18"/>
</dbReference>
<dbReference type="Ensembl" id="ENSMUST00000142837.3">
    <molecule id="A6H8H2-1"/>
    <property type="protein sequence ID" value="ENSMUSP00000123367.3"/>
    <property type="gene ID" value="ENSMUSG00000038024.18"/>
</dbReference>
<dbReference type="GeneID" id="329877"/>
<dbReference type="KEGG" id="mmu:329877"/>
<dbReference type="UCSC" id="uc008tmb.2">
    <molecule id="A6H8H2-1"/>
    <property type="organism name" value="mouse"/>
</dbReference>
<dbReference type="UCSC" id="uc008tmc.1">
    <molecule id="A6H8H2-2"/>
    <property type="organism name" value="mouse"/>
</dbReference>
<dbReference type="AGR" id="MGI:1914769"/>
<dbReference type="CTD" id="55667"/>
<dbReference type="MGI" id="MGI:1914769">
    <property type="gene designation" value="Dennd4c"/>
</dbReference>
<dbReference type="VEuPathDB" id="HostDB:ENSMUSG00000038024"/>
<dbReference type="eggNOG" id="KOG2127">
    <property type="taxonomic scope" value="Eukaryota"/>
</dbReference>
<dbReference type="GeneTree" id="ENSGT00940000158215"/>
<dbReference type="InParanoid" id="A6H8H2"/>
<dbReference type="OMA" id="ICYRVMM"/>
<dbReference type="OrthoDB" id="75250at2759"/>
<dbReference type="TreeFam" id="TF313237"/>
<dbReference type="Reactome" id="R-MMU-8876198">
    <property type="pathway name" value="RAB GEFs exchange GTP for GDP on RABs"/>
</dbReference>
<dbReference type="BioGRID-ORCS" id="329877">
    <property type="hits" value="4 hits in 77 CRISPR screens"/>
</dbReference>
<dbReference type="ChiTaRS" id="Dennd4c">
    <property type="organism name" value="mouse"/>
</dbReference>
<dbReference type="PRO" id="PR:A6H8H2"/>
<dbReference type="Proteomes" id="UP000000589">
    <property type="component" value="Chromosome 4"/>
</dbReference>
<dbReference type="RNAct" id="A6H8H2">
    <property type="molecule type" value="protein"/>
</dbReference>
<dbReference type="Bgee" id="ENSMUSG00000038024">
    <property type="expression patterns" value="Expressed in stroma of bone marrow and 254 other cell types or tissues"/>
</dbReference>
<dbReference type="ExpressionAtlas" id="A6H8H2">
    <property type="expression patterns" value="baseline and differential"/>
</dbReference>
<dbReference type="GO" id="GO:0030659">
    <property type="term" value="C:cytoplasmic vesicle membrane"/>
    <property type="evidence" value="ECO:0007669"/>
    <property type="project" value="UniProtKB-SubCell"/>
</dbReference>
<dbReference type="GO" id="GO:0005829">
    <property type="term" value="C:cytosol"/>
    <property type="evidence" value="ECO:0000314"/>
    <property type="project" value="UniProtKB"/>
</dbReference>
<dbReference type="GO" id="GO:0005794">
    <property type="term" value="C:Golgi apparatus"/>
    <property type="evidence" value="ECO:0007669"/>
    <property type="project" value="Ensembl"/>
</dbReference>
<dbReference type="GO" id="GO:0032593">
    <property type="term" value="C:insulin-responsive compartment"/>
    <property type="evidence" value="ECO:0000314"/>
    <property type="project" value="UniProtKB"/>
</dbReference>
<dbReference type="GO" id="GO:0005886">
    <property type="term" value="C:plasma membrane"/>
    <property type="evidence" value="ECO:0000314"/>
    <property type="project" value="UniProtKB"/>
</dbReference>
<dbReference type="GO" id="GO:0030904">
    <property type="term" value="C:retromer complex"/>
    <property type="evidence" value="ECO:0000314"/>
    <property type="project" value="MGI"/>
</dbReference>
<dbReference type="GO" id="GO:0005085">
    <property type="term" value="F:guanyl-nucleotide exchange factor activity"/>
    <property type="evidence" value="ECO:0000314"/>
    <property type="project" value="UniProtKB"/>
</dbReference>
<dbReference type="GO" id="GO:0032869">
    <property type="term" value="P:cellular response to insulin stimulus"/>
    <property type="evidence" value="ECO:0000315"/>
    <property type="project" value="UniProtKB"/>
</dbReference>
<dbReference type="GO" id="GO:0072659">
    <property type="term" value="P:protein localization to plasma membrane"/>
    <property type="evidence" value="ECO:0000315"/>
    <property type="project" value="UniProtKB"/>
</dbReference>
<dbReference type="GO" id="GO:0015031">
    <property type="term" value="P:protein transport"/>
    <property type="evidence" value="ECO:0007669"/>
    <property type="project" value="UniProtKB-KW"/>
</dbReference>
<dbReference type="FunFam" id="1.25.40.10:FF:000042">
    <property type="entry name" value="C-myc promoter-binding protein isoform X1"/>
    <property type="match status" value="1"/>
</dbReference>
<dbReference type="FunFam" id="2.100.10.50:FF:000001">
    <property type="entry name" value="DENN domain containing 4C"/>
    <property type="match status" value="1"/>
</dbReference>
<dbReference type="Gene3D" id="2.100.10.50">
    <property type="match status" value="1"/>
</dbReference>
<dbReference type="Gene3D" id="3.40.50.11500">
    <property type="match status" value="1"/>
</dbReference>
<dbReference type="Gene3D" id="1.25.40.10">
    <property type="entry name" value="Tetratricopeptide repeat domain"/>
    <property type="match status" value="1"/>
</dbReference>
<dbReference type="InterPro" id="IPR001194">
    <property type="entry name" value="cDENN_dom"/>
</dbReference>
<dbReference type="InterPro" id="IPR005112">
    <property type="entry name" value="dDENN_dom"/>
</dbReference>
<dbReference type="InterPro" id="IPR043153">
    <property type="entry name" value="DENN_C"/>
</dbReference>
<dbReference type="InterPro" id="IPR051696">
    <property type="entry name" value="DENN_Domain_GEFs"/>
</dbReference>
<dbReference type="InterPro" id="IPR023341">
    <property type="entry name" value="MABP"/>
</dbReference>
<dbReference type="InterPro" id="IPR011990">
    <property type="entry name" value="TPR-like_helical_dom_sf"/>
</dbReference>
<dbReference type="InterPro" id="IPR037516">
    <property type="entry name" value="Tripartite_DENN"/>
</dbReference>
<dbReference type="InterPro" id="IPR005113">
    <property type="entry name" value="uDENN_dom"/>
</dbReference>
<dbReference type="PANTHER" id="PTHR12296">
    <property type="entry name" value="DENN DOMAIN-CONTAINING PROTEIN 4"/>
    <property type="match status" value="1"/>
</dbReference>
<dbReference type="PANTHER" id="PTHR12296:SF17">
    <property type="entry name" value="DENN DOMAIN-CONTAINING PROTEIN 4C"/>
    <property type="match status" value="1"/>
</dbReference>
<dbReference type="Pfam" id="PF03455">
    <property type="entry name" value="dDENN"/>
    <property type="match status" value="1"/>
</dbReference>
<dbReference type="Pfam" id="PF02141">
    <property type="entry name" value="DENN"/>
    <property type="match status" value="1"/>
</dbReference>
<dbReference type="Pfam" id="PF03456">
    <property type="entry name" value="uDENN"/>
    <property type="match status" value="1"/>
</dbReference>
<dbReference type="SMART" id="SM00801">
    <property type="entry name" value="dDENN"/>
    <property type="match status" value="1"/>
</dbReference>
<dbReference type="SMART" id="SM00799">
    <property type="entry name" value="DENN"/>
    <property type="match status" value="1"/>
</dbReference>
<dbReference type="SMART" id="SM00800">
    <property type="entry name" value="uDENN"/>
    <property type="match status" value="1"/>
</dbReference>
<dbReference type="PROSITE" id="PS50211">
    <property type="entry name" value="DENN"/>
    <property type="match status" value="1"/>
</dbReference>
<dbReference type="PROSITE" id="PS51498">
    <property type="entry name" value="MABP"/>
    <property type="match status" value="1"/>
</dbReference>
<gene>
    <name type="primary">Dennd4c</name>
</gene>
<organism>
    <name type="scientific">Mus musculus</name>
    <name type="common">Mouse</name>
    <dbReference type="NCBI Taxonomy" id="10090"/>
    <lineage>
        <taxon>Eukaryota</taxon>
        <taxon>Metazoa</taxon>
        <taxon>Chordata</taxon>
        <taxon>Craniata</taxon>
        <taxon>Vertebrata</taxon>
        <taxon>Euteleostomi</taxon>
        <taxon>Mammalia</taxon>
        <taxon>Eutheria</taxon>
        <taxon>Euarchontoglires</taxon>
        <taxon>Glires</taxon>
        <taxon>Rodentia</taxon>
        <taxon>Myomorpha</taxon>
        <taxon>Muroidea</taxon>
        <taxon>Muridae</taxon>
        <taxon>Murinae</taxon>
        <taxon>Mus</taxon>
        <taxon>Mus</taxon>
    </lineage>
</organism>
<sequence>MIEDKGPRVTDYFVVAGLTDTSTLLDQEINRTDTNSIGPKAPITDIAVIIKSAGETVPEGYTCVEATPSALQANLNYGSLKSPELFLCYRRGRDKPPLTDIGVLYEGKERLMPGCEVIQATPYGRCANVNNSSTTSQRIFITYRRAPPVRSQNSLAVTDICVIITSKGETPPHTFCKVDKNLNCGMWGSNVFLCYKKSVPASNAIAYKAGLIFRYPEEDYESFPLSPSVPLFCLPMGATIECWDPQIKYPLPVFSTFVLTGSSAEKVYGAAIQFYEPYSQERLTEKQLTQLGLLTLVEKRVVSKPINSNKCICLLSHWPFFEAFKNFLMFIYKVSVSGPHPLPIEKHISHFMQNIPFPSPQRPRILIQLSVHDAFILSQPVSTPLPLSGANFSSLLMNLGPENCATLLLLVLLESKILLHSLRPAVLTGVAEAVVAMIFPFQWQCPYIPLCPLSLAGVLSAPLPFIVGVDSRYFDLHDPPQDVVCIDLDTNTLYVADERKNINWKQLPKRPCKSLLGTLRRLYQQLCSVHRKPQESSAIEMTPIEADYSWQKKMTQLEMEIQETFLRFMASILKGYRSYLRPITEAPSNKATAADSLFDRQGFLKSRDRAYTKFYTLLSKTQIFIRFIEECSFVSDKDTGLAFFDDCIEKLFPDKGVERTEKVDLDSAEDTRLIELDDSQRSEHTVFIMPPEPPPDDGNNLSPQYSYTYFPRLDLKLFDSPQKLKLCFNRHPPGSSITNSPALMAKRTKQEIKTAHKLAKRCYTNPPQWAKYLFSHCYSLWFICLPAYVRVSHPKVRALQQAHDVLVKMRKTDVDPLDEVCYRVVMQLCGLWVNPVLAVRVLFEMKTARIKPNAITYGYYNKVVLESPWPSSTRSGIFLWTKVRNVVHGLAQFRQPLKKTGQKSQVFSISGGQSDQGYGSKDELVKEGADGHAPEEHTPPELTTTELHIEEECDISAIVSKHLQPTPEPQSPTEPPAWGSSIVKVPSGLFDTNNRTSTGSTSTVLFSTQAPVEDAVFSEVTNFKKNGDRGEKKQKHFPERSCSFSSESRAGMLLKKSSLDLNSSEMAIMMGADAKILTAALTCPKTSPPHVTRTHSFENVNCHLADSRTRMSEGTRDSEHRSSPVLEMLEESQELLEPVVGDNVAETAAEMTCNSLQSNSHSDQSRDTQAGAQDPVNKRSSSYATRKAIEREDVETGLDPLSLLATECVEKTSDSEDKLFSPVISRNLADEIESYMNLKSPLGSKSCSMELHGEGNQEPGSPAVFAHPLERSSSLPSDRGPPARDSTETEKSSPAVSSSKTLTGRFKPQSPYRAYKDRSTSLSALVRSSPNSSLGSVVNSLSGLKLDNILSGPKIDVLKSSMKQAATVASKMWVAVASAYSYSDDEEETNKDYSFPAGLEDHHIVGETLSPNTSVSGLVPSELTQSNTSLGSSSSSGDVGKLQCPAGEVPFSRNIKGQDFEKSDHGSSQNTSMSSIYQNCAMEVLMSSCSQCRACGALVYDEEIMAGWTADDSNLNTTCPFCKSNFLPLLNVEFKDLRGSASFFLKPSTSGDSLQSGSIPSASEPSEHKPTSSSAEPDLISFMDFSKHSETITEEASYTVESSDEIKKTNGDVQSVKMSSVPNSLSKRNVSLTRSHSVGGPLQNIDFSQRPFHGVSTVSLPSSLQEDVDHLGKRPSPPPVSVPYLSPLVLRKELESLLENEGDQVIHTSSFINQHPIIFWNLVWYFRRLDLPSNLPGLILTSEHCNGGVQLPLSSLSQDSKLVYIQLLWDNINLHQEPGEPLYVSWRNLNSEKKPSLLSEQQQAASALVETIRQSIQQNDVLKPINLLSQQMKPGTKRQRSLYREILFLSLVSLGRENIDIEAFDNEYGLAYRSLPSESLERLQRIDAPPSISVEWCRKCFGAPLI</sequence>
<feature type="chain" id="PRO_0000420446" description="DENN domain-containing protein 4C">
    <location>
        <begin position="1"/>
        <end position="1906"/>
    </location>
</feature>
<feature type="domain" description="MABP" evidence="3">
    <location>
        <begin position="40"/>
        <end position="199"/>
    </location>
</feature>
<feature type="domain" description="uDENN" evidence="2">
    <location>
        <begin position="191"/>
        <end position="363"/>
    </location>
</feature>
<feature type="domain" description="cDENN" evidence="2">
    <location>
        <begin position="384"/>
        <end position="520"/>
    </location>
</feature>
<feature type="domain" description="dDENN" evidence="2">
    <location>
        <begin position="522"/>
        <end position="640"/>
    </location>
</feature>
<feature type="repeat" description="PPR">
    <location>
        <begin position="818"/>
        <end position="852"/>
    </location>
</feature>
<feature type="region of interest" description="Disordered" evidence="4">
    <location>
        <begin position="904"/>
        <end position="942"/>
    </location>
</feature>
<feature type="region of interest" description="Disordered" evidence="4">
    <location>
        <begin position="963"/>
        <end position="984"/>
    </location>
</feature>
<feature type="region of interest" description="Disordered" evidence="4">
    <location>
        <begin position="1154"/>
        <end position="1184"/>
    </location>
</feature>
<feature type="region of interest" description="Disordered" evidence="4">
    <location>
        <begin position="1246"/>
        <end position="1317"/>
    </location>
</feature>
<feature type="region of interest" description="Disordered" evidence="4">
    <location>
        <begin position="1410"/>
        <end position="1440"/>
    </location>
</feature>
<feature type="region of interest" description="Disordered" evidence="4">
    <location>
        <begin position="1548"/>
        <end position="1577"/>
    </location>
</feature>
<feature type="region of interest" description="Disordered" evidence="4">
    <location>
        <begin position="1596"/>
        <end position="1628"/>
    </location>
</feature>
<feature type="compositionally biased region" description="Polar residues" evidence="4">
    <location>
        <begin position="904"/>
        <end position="917"/>
    </location>
</feature>
<feature type="compositionally biased region" description="Basic and acidic residues" evidence="4">
    <location>
        <begin position="920"/>
        <end position="939"/>
    </location>
</feature>
<feature type="compositionally biased region" description="Pro residues" evidence="4">
    <location>
        <begin position="966"/>
        <end position="975"/>
    </location>
</feature>
<feature type="compositionally biased region" description="Polar residues" evidence="4">
    <location>
        <begin position="1154"/>
        <end position="1171"/>
    </location>
</feature>
<feature type="compositionally biased region" description="Basic and acidic residues" evidence="4">
    <location>
        <begin position="1281"/>
        <end position="1291"/>
    </location>
</feature>
<feature type="compositionally biased region" description="Polar residues" evidence="4">
    <location>
        <begin position="1292"/>
        <end position="1302"/>
    </location>
</feature>
<feature type="compositionally biased region" description="Low complexity" evidence="4">
    <location>
        <begin position="1423"/>
        <end position="1437"/>
    </location>
</feature>
<feature type="compositionally biased region" description="Polar residues" evidence="4">
    <location>
        <begin position="1548"/>
        <end position="1564"/>
    </location>
</feature>
<feature type="compositionally biased region" description="Polar residues" evidence="4">
    <location>
        <begin position="1611"/>
        <end position="1628"/>
    </location>
</feature>
<feature type="modified residue" description="Phosphoserine" evidence="1">
    <location>
        <position position="702"/>
    </location>
</feature>
<feature type="modified residue" description="Phosphoserine" evidence="1">
    <location>
        <position position="736"/>
    </location>
</feature>
<feature type="modified residue" description="Phosphoserine" evidence="9">
    <location>
        <position position="740"/>
    </location>
</feature>
<feature type="modified residue" description="Phosphothreonine" evidence="9">
    <location>
        <position position="966"/>
    </location>
</feature>
<feature type="modified residue" description="Phosphoserine" evidence="8 9">
    <location>
        <position position="971"/>
    </location>
</feature>
<feature type="modified residue" description="Phosphothreonine" evidence="1">
    <location>
        <position position="973"/>
    </location>
</feature>
<feature type="modified residue" description="Phosphoserine" evidence="7 9">
    <location>
        <position position="987"/>
    </location>
</feature>
<feature type="modified residue" description="Phosphoserine" evidence="1">
    <location>
        <position position="1000"/>
    </location>
</feature>
<feature type="modified residue" description="Phosphoserine" evidence="5">
    <location>
        <position position="1043"/>
    </location>
</feature>
<feature type="modified residue" description="Phosphoserine" evidence="1">
    <location>
        <position position="1058"/>
    </location>
</feature>
<feature type="modified residue" description="Phosphoserine" evidence="5 9">
    <location>
        <position position="1096"/>
    </location>
</feature>
<feature type="modified residue" description="Phosphoserine" evidence="1">
    <location>
        <position position="1123"/>
    </location>
</feature>
<feature type="modified residue" description="Phosphoserine" evidence="1">
    <location>
        <position position="1181"/>
    </location>
</feature>
<feature type="modified residue" description="Phosphoserine" evidence="1">
    <location>
        <position position="1221"/>
    </location>
</feature>
<feature type="modified residue" description="Phosphoserine" evidence="1">
    <location>
        <position position="1240"/>
    </location>
</feature>
<feature type="modified residue" description="Phosphoserine" evidence="9">
    <location>
        <position position="1248"/>
    </location>
</feature>
<feature type="modified residue" description="Phosphoserine" evidence="1">
    <location>
        <position position="1274"/>
    </location>
</feature>
<feature type="modified residue" description="Phosphoserine" evidence="5">
    <location>
        <position position="1321"/>
    </location>
</feature>
<feature type="modified residue" description="Phosphoserine" evidence="1">
    <location>
        <position position="1333"/>
    </location>
</feature>
<feature type="modified residue" description="Phosphoserine" evidence="1">
    <location>
        <position position="1342"/>
    </location>
</feature>
<feature type="modified residue" description="Phosphoserine" evidence="1">
    <location>
        <position position="1620"/>
    </location>
</feature>
<feature type="modified residue" description="Phosphoserine" evidence="1">
    <location>
        <position position="1624"/>
    </location>
</feature>
<feature type="modified residue" description="Phosphoserine" evidence="1">
    <location>
        <position position="1626"/>
    </location>
</feature>
<feature type="modified residue" description="Phosphoserine" evidence="9">
    <location>
        <position position="1637"/>
    </location>
</feature>
<feature type="modified residue" description="Phosphoserine" evidence="1">
    <location>
        <position position="1796"/>
    </location>
</feature>
<feature type="splice variant" id="VSP_044491" description="In isoform 2." evidence="6">
    <original>S</original>
    <variation>SAPQNAACGSDGDTVSHGSVDSSNDANNGEHTVFVRDLISLDSIDNHSST</variation>
    <location>
        <position position="910"/>
    </location>
</feature>
<proteinExistence type="evidence at protein level"/>
<protein>
    <recommendedName>
        <fullName>DENN domain-containing protein 4C</fullName>
    </recommendedName>
</protein>
<name>DEN4C_MOUSE</name>